<evidence type="ECO:0000255" key="1">
    <source>
        <dbReference type="HAMAP-Rule" id="MF_00049"/>
    </source>
</evidence>
<proteinExistence type="inferred from homology"/>
<gene>
    <name evidence="1" type="primary">leuS</name>
    <name type="ordered locus">PC1_1187</name>
</gene>
<keyword id="KW-0030">Aminoacyl-tRNA synthetase</keyword>
<keyword id="KW-0067">ATP-binding</keyword>
<keyword id="KW-0963">Cytoplasm</keyword>
<keyword id="KW-0436">Ligase</keyword>
<keyword id="KW-0547">Nucleotide-binding</keyword>
<keyword id="KW-0648">Protein biosynthesis</keyword>
<name>SYL_PECCP</name>
<reference key="1">
    <citation type="submission" date="2009-07" db="EMBL/GenBank/DDBJ databases">
        <title>Complete sequence of Pectobacterium carotovorum subsp. carotovorum PC1.</title>
        <authorList>
            <consortium name="US DOE Joint Genome Institute"/>
            <person name="Lucas S."/>
            <person name="Copeland A."/>
            <person name="Lapidus A."/>
            <person name="Glavina del Rio T."/>
            <person name="Tice H."/>
            <person name="Bruce D."/>
            <person name="Goodwin L."/>
            <person name="Pitluck S."/>
            <person name="Munk A.C."/>
            <person name="Brettin T."/>
            <person name="Detter J.C."/>
            <person name="Han C."/>
            <person name="Tapia R."/>
            <person name="Larimer F."/>
            <person name="Land M."/>
            <person name="Hauser L."/>
            <person name="Kyrpides N."/>
            <person name="Mikhailova N."/>
            <person name="Balakrishnan V."/>
            <person name="Glasner J."/>
            <person name="Perna N.T."/>
        </authorList>
    </citation>
    <scope>NUCLEOTIDE SEQUENCE [LARGE SCALE GENOMIC DNA]</scope>
    <source>
        <strain>PC1</strain>
    </source>
</reference>
<comment type="catalytic activity">
    <reaction evidence="1">
        <text>tRNA(Leu) + L-leucine + ATP = L-leucyl-tRNA(Leu) + AMP + diphosphate</text>
        <dbReference type="Rhea" id="RHEA:11688"/>
        <dbReference type="Rhea" id="RHEA-COMP:9613"/>
        <dbReference type="Rhea" id="RHEA-COMP:9622"/>
        <dbReference type="ChEBI" id="CHEBI:30616"/>
        <dbReference type="ChEBI" id="CHEBI:33019"/>
        <dbReference type="ChEBI" id="CHEBI:57427"/>
        <dbReference type="ChEBI" id="CHEBI:78442"/>
        <dbReference type="ChEBI" id="CHEBI:78494"/>
        <dbReference type="ChEBI" id="CHEBI:456215"/>
        <dbReference type="EC" id="6.1.1.4"/>
    </reaction>
</comment>
<comment type="subcellular location">
    <subcellularLocation>
        <location evidence="1">Cytoplasm</location>
    </subcellularLocation>
</comment>
<comment type="similarity">
    <text evidence="1">Belongs to the class-I aminoacyl-tRNA synthetase family.</text>
</comment>
<accession>C6DBW8</accession>
<feature type="chain" id="PRO_1000202224" description="Leucine--tRNA ligase">
    <location>
        <begin position="1"/>
        <end position="860"/>
    </location>
</feature>
<feature type="short sequence motif" description="'HIGH' region">
    <location>
        <begin position="42"/>
        <end position="52"/>
    </location>
</feature>
<feature type="short sequence motif" description="'KMSKS' region">
    <location>
        <begin position="619"/>
        <end position="623"/>
    </location>
</feature>
<feature type="binding site" evidence="1">
    <location>
        <position position="622"/>
    </location>
    <ligand>
        <name>ATP</name>
        <dbReference type="ChEBI" id="CHEBI:30616"/>
    </ligand>
</feature>
<protein>
    <recommendedName>
        <fullName evidence="1">Leucine--tRNA ligase</fullName>
        <ecNumber evidence="1">6.1.1.4</ecNumber>
    </recommendedName>
    <alternativeName>
        <fullName evidence="1">Leucyl-tRNA synthetase</fullName>
        <shortName evidence="1">LeuRS</shortName>
    </alternativeName>
</protein>
<sequence length="860" mass="96971">MQEQYRPEEIEADVQLHWQEKQTFKVTEQPGKEKYYCLSMLPYPSGRLHMGHVRNYTIGDVISRYQRMLGKNVLQPIGWDAFGLPAEGAAVKNNTAPAPWTYANIDYMKNQLKLLGFGYDWDREVATCKPDYYRWEQWFFTKLYEKGLVYKKTSAVNWCPNDQTVLANEQVIDGCCWRCDTKVERKEIPQWFIKITAYADQLLNDLDTLESWPEQVKTMQRNWIGRSEGVEITFDVADSAEKLTVYTTRPDTFMGVTYVAVAAGHPLAAQAAAANPALADFIAECRNTKVAEADMATMEKKGMATGLYAIHPLNGEKVAIWVANFVLMEYGTGAVMAVPGHDQRDWEFATKYDLSIKPVILNADGSEPDLSAEAMTEKGNLFNSGEFDGLDFDAAFNAIADKLVEKGIGERKVNYRLRDWGVSRQRYWGAPIPMVTLEDGTVIPTPEDQLPVILPEDVVMDGITSPLKSNPEWAKTTVNGQPALRETDTFDTFMESSWYYARYTCPQYDQGMLDPAAANYWLPVDQYVGGIEHAIMHLMYFRFFHKLMRDAGLVTSDEPAKRLLCQGMVLADAFYYLGNNGERVWVSPIDVDVERDEKGRIVKAVDNEGRDVIYAGMSKMSKSKNNGIDPQVMVEKYGADTVRLFMMFASPAEMTLEWQESGVEGANRFLKRVWRQAFEHTEKGATTALDVATLTEDQKSLRRDLHKTIAKVTDDIGRRQTFNTAIAAIMELMNKLAKAPQDSDQDRALTQETLLAVVRMLYPFTPHVCFTLWQALQGEGDIDTAPWPVADESAMVEDSKLVVVQVNGKVRGKITVAADASEEQVRERAAQEPLVAKYLDGVTVRKVIYVPGKLLNLVVG</sequence>
<organism>
    <name type="scientific">Pectobacterium carotovorum subsp. carotovorum (strain PC1)</name>
    <dbReference type="NCBI Taxonomy" id="561230"/>
    <lineage>
        <taxon>Bacteria</taxon>
        <taxon>Pseudomonadati</taxon>
        <taxon>Pseudomonadota</taxon>
        <taxon>Gammaproteobacteria</taxon>
        <taxon>Enterobacterales</taxon>
        <taxon>Pectobacteriaceae</taxon>
        <taxon>Pectobacterium</taxon>
    </lineage>
</organism>
<dbReference type="EC" id="6.1.1.4" evidence="1"/>
<dbReference type="EMBL" id="CP001657">
    <property type="protein sequence ID" value="ACT12235.1"/>
    <property type="molecule type" value="Genomic_DNA"/>
</dbReference>
<dbReference type="RefSeq" id="WP_015839469.1">
    <property type="nucleotide sequence ID" value="NC_012917.1"/>
</dbReference>
<dbReference type="SMR" id="C6DBW8"/>
<dbReference type="STRING" id="561230.PC1_1187"/>
<dbReference type="KEGG" id="pct:PC1_1187"/>
<dbReference type="eggNOG" id="COG0495">
    <property type="taxonomic scope" value="Bacteria"/>
</dbReference>
<dbReference type="HOGENOM" id="CLU_004427_0_0_6"/>
<dbReference type="OrthoDB" id="9810365at2"/>
<dbReference type="Proteomes" id="UP000002736">
    <property type="component" value="Chromosome"/>
</dbReference>
<dbReference type="GO" id="GO:0005829">
    <property type="term" value="C:cytosol"/>
    <property type="evidence" value="ECO:0007669"/>
    <property type="project" value="TreeGrafter"/>
</dbReference>
<dbReference type="GO" id="GO:0002161">
    <property type="term" value="F:aminoacyl-tRNA deacylase activity"/>
    <property type="evidence" value="ECO:0007669"/>
    <property type="project" value="InterPro"/>
</dbReference>
<dbReference type="GO" id="GO:0005524">
    <property type="term" value="F:ATP binding"/>
    <property type="evidence" value="ECO:0007669"/>
    <property type="project" value="UniProtKB-UniRule"/>
</dbReference>
<dbReference type="GO" id="GO:0004823">
    <property type="term" value="F:leucine-tRNA ligase activity"/>
    <property type="evidence" value="ECO:0007669"/>
    <property type="project" value="UniProtKB-UniRule"/>
</dbReference>
<dbReference type="GO" id="GO:0006429">
    <property type="term" value="P:leucyl-tRNA aminoacylation"/>
    <property type="evidence" value="ECO:0007669"/>
    <property type="project" value="UniProtKB-UniRule"/>
</dbReference>
<dbReference type="CDD" id="cd07958">
    <property type="entry name" value="Anticodon_Ia_Leu_BEm"/>
    <property type="match status" value="1"/>
</dbReference>
<dbReference type="CDD" id="cd00812">
    <property type="entry name" value="LeuRS_core"/>
    <property type="match status" value="1"/>
</dbReference>
<dbReference type="FunFam" id="1.10.730.10:FF:000002">
    <property type="entry name" value="Leucine--tRNA ligase"/>
    <property type="match status" value="1"/>
</dbReference>
<dbReference type="FunFam" id="2.20.28.290:FF:000001">
    <property type="entry name" value="Leucine--tRNA ligase"/>
    <property type="match status" value="1"/>
</dbReference>
<dbReference type="FunFam" id="3.10.20.590:FF:000001">
    <property type="entry name" value="Leucine--tRNA ligase"/>
    <property type="match status" value="1"/>
</dbReference>
<dbReference type="FunFam" id="3.40.50.620:FF:000003">
    <property type="entry name" value="Leucine--tRNA ligase"/>
    <property type="match status" value="1"/>
</dbReference>
<dbReference type="FunFam" id="3.40.50.620:FF:000124">
    <property type="entry name" value="Leucine--tRNA ligase"/>
    <property type="match status" value="1"/>
</dbReference>
<dbReference type="FunFam" id="3.90.740.10:FF:000012">
    <property type="entry name" value="Leucine--tRNA ligase"/>
    <property type="match status" value="1"/>
</dbReference>
<dbReference type="Gene3D" id="2.20.28.290">
    <property type="match status" value="1"/>
</dbReference>
<dbReference type="Gene3D" id="3.10.20.590">
    <property type="match status" value="1"/>
</dbReference>
<dbReference type="Gene3D" id="3.40.50.620">
    <property type="entry name" value="HUPs"/>
    <property type="match status" value="2"/>
</dbReference>
<dbReference type="Gene3D" id="1.10.730.10">
    <property type="entry name" value="Isoleucyl-tRNA Synthetase, Domain 1"/>
    <property type="match status" value="1"/>
</dbReference>
<dbReference type="Gene3D" id="3.90.740.10">
    <property type="entry name" value="Valyl/Leucyl/Isoleucyl-tRNA synthetase, editing domain"/>
    <property type="match status" value="1"/>
</dbReference>
<dbReference type="HAMAP" id="MF_00049_B">
    <property type="entry name" value="Leu_tRNA_synth_B"/>
    <property type="match status" value="1"/>
</dbReference>
<dbReference type="InterPro" id="IPR001412">
    <property type="entry name" value="aa-tRNA-synth_I_CS"/>
</dbReference>
<dbReference type="InterPro" id="IPR002300">
    <property type="entry name" value="aa-tRNA-synth_Ia"/>
</dbReference>
<dbReference type="InterPro" id="IPR002302">
    <property type="entry name" value="Leu-tRNA-ligase"/>
</dbReference>
<dbReference type="InterPro" id="IPR025709">
    <property type="entry name" value="Leu_tRNA-synth_edit"/>
</dbReference>
<dbReference type="InterPro" id="IPR013155">
    <property type="entry name" value="M/V/L/I-tRNA-synth_anticd-bd"/>
</dbReference>
<dbReference type="InterPro" id="IPR015413">
    <property type="entry name" value="Methionyl/Leucyl_tRNA_Synth"/>
</dbReference>
<dbReference type="InterPro" id="IPR014729">
    <property type="entry name" value="Rossmann-like_a/b/a_fold"/>
</dbReference>
<dbReference type="InterPro" id="IPR009080">
    <property type="entry name" value="tRNAsynth_Ia_anticodon-bd"/>
</dbReference>
<dbReference type="InterPro" id="IPR009008">
    <property type="entry name" value="Val/Leu/Ile-tRNA-synth_edit"/>
</dbReference>
<dbReference type="NCBIfam" id="TIGR00396">
    <property type="entry name" value="leuS_bact"/>
    <property type="match status" value="1"/>
</dbReference>
<dbReference type="PANTHER" id="PTHR43740:SF2">
    <property type="entry name" value="LEUCINE--TRNA LIGASE, MITOCHONDRIAL"/>
    <property type="match status" value="1"/>
</dbReference>
<dbReference type="PANTHER" id="PTHR43740">
    <property type="entry name" value="LEUCYL-TRNA SYNTHETASE"/>
    <property type="match status" value="1"/>
</dbReference>
<dbReference type="Pfam" id="PF08264">
    <property type="entry name" value="Anticodon_1"/>
    <property type="match status" value="1"/>
</dbReference>
<dbReference type="Pfam" id="PF00133">
    <property type="entry name" value="tRNA-synt_1"/>
    <property type="match status" value="2"/>
</dbReference>
<dbReference type="Pfam" id="PF13603">
    <property type="entry name" value="tRNA-synt_1_2"/>
    <property type="match status" value="1"/>
</dbReference>
<dbReference type="Pfam" id="PF09334">
    <property type="entry name" value="tRNA-synt_1g"/>
    <property type="match status" value="1"/>
</dbReference>
<dbReference type="PRINTS" id="PR00985">
    <property type="entry name" value="TRNASYNTHLEU"/>
</dbReference>
<dbReference type="SUPFAM" id="SSF47323">
    <property type="entry name" value="Anticodon-binding domain of a subclass of class I aminoacyl-tRNA synthetases"/>
    <property type="match status" value="1"/>
</dbReference>
<dbReference type="SUPFAM" id="SSF52374">
    <property type="entry name" value="Nucleotidylyl transferase"/>
    <property type="match status" value="1"/>
</dbReference>
<dbReference type="SUPFAM" id="SSF50677">
    <property type="entry name" value="ValRS/IleRS/LeuRS editing domain"/>
    <property type="match status" value="1"/>
</dbReference>
<dbReference type="PROSITE" id="PS00178">
    <property type="entry name" value="AA_TRNA_LIGASE_I"/>
    <property type="match status" value="1"/>
</dbReference>